<accession>Q63ST1</accession>
<feature type="chain" id="PRO_0000181668" description="tRNA(Ile)-lysidine synthase">
    <location>
        <begin position="1"/>
        <end position="489"/>
    </location>
</feature>
<feature type="binding site" evidence="1">
    <location>
        <begin position="35"/>
        <end position="40"/>
    </location>
    <ligand>
        <name>ATP</name>
        <dbReference type="ChEBI" id="CHEBI:30616"/>
    </ligand>
</feature>
<name>TILS_BURPS</name>
<dbReference type="EC" id="6.3.4.19" evidence="1"/>
<dbReference type="EMBL" id="BX571965">
    <property type="protein sequence ID" value="CAH36242.1"/>
    <property type="molecule type" value="Genomic_DNA"/>
</dbReference>
<dbReference type="RefSeq" id="WP_004524749.1">
    <property type="nucleotide sequence ID" value="NZ_CP009538.1"/>
</dbReference>
<dbReference type="RefSeq" id="YP_108835.1">
    <property type="nucleotide sequence ID" value="NC_006350.1"/>
</dbReference>
<dbReference type="SMR" id="Q63ST1"/>
<dbReference type="STRING" id="272560.BPSL2240"/>
<dbReference type="KEGG" id="bps:BPSL2240"/>
<dbReference type="PATRIC" id="fig|272560.6.peg.2545"/>
<dbReference type="eggNOG" id="COG0037">
    <property type="taxonomic scope" value="Bacteria"/>
</dbReference>
<dbReference type="Proteomes" id="UP000000605">
    <property type="component" value="Chromosome 1"/>
</dbReference>
<dbReference type="GO" id="GO:0005737">
    <property type="term" value="C:cytoplasm"/>
    <property type="evidence" value="ECO:0007669"/>
    <property type="project" value="UniProtKB-SubCell"/>
</dbReference>
<dbReference type="GO" id="GO:0005524">
    <property type="term" value="F:ATP binding"/>
    <property type="evidence" value="ECO:0007669"/>
    <property type="project" value="UniProtKB-UniRule"/>
</dbReference>
<dbReference type="GO" id="GO:0032267">
    <property type="term" value="F:tRNA(Ile)-lysidine synthase activity"/>
    <property type="evidence" value="ECO:0007669"/>
    <property type="project" value="UniProtKB-EC"/>
</dbReference>
<dbReference type="GO" id="GO:0006400">
    <property type="term" value="P:tRNA modification"/>
    <property type="evidence" value="ECO:0007669"/>
    <property type="project" value="UniProtKB-UniRule"/>
</dbReference>
<dbReference type="CDD" id="cd01992">
    <property type="entry name" value="TilS_N"/>
    <property type="match status" value="1"/>
</dbReference>
<dbReference type="Gene3D" id="1.20.59.20">
    <property type="match status" value="1"/>
</dbReference>
<dbReference type="Gene3D" id="3.40.50.620">
    <property type="entry name" value="HUPs"/>
    <property type="match status" value="1"/>
</dbReference>
<dbReference type="HAMAP" id="MF_01161">
    <property type="entry name" value="tRNA_Ile_lys_synt"/>
    <property type="match status" value="1"/>
</dbReference>
<dbReference type="InterPro" id="IPR012796">
    <property type="entry name" value="Lysidine-tRNA-synth_C"/>
</dbReference>
<dbReference type="InterPro" id="IPR014729">
    <property type="entry name" value="Rossmann-like_a/b/a_fold"/>
</dbReference>
<dbReference type="InterPro" id="IPR011063">
    <property type="entry name" value="TilS/TtcA_N"/>
</dbReference>
<dbReference type="InterPro" id="IPR012094">
    <property type="entry name" value="tRNA_Ile_lys_synt"/>
</dbReference>
<dbReference type="InterPro" id="IPR012795">
    <property type="entry name" value="tRNA_Ile_lys_synt_N"/>
</dbReference>
<dbReference type="InterPro" id="IPR015262">
    <property type="entry name" value="tRNA_Ile_lys_synt_subst-bd"/>
</dbReference>
<dbReference type="NCBIfam" id="TIGR02433">
    <property type="entry name" value="lysidine_TilS_C"/>
    <property type="match status" value="1"/>
</dbReference>
<dbReference type="NCBIfam" id="TIGR02432">
    <property type="entry name" value="lysidine_TilS_N"/>
    <property type="match status" value="1"/>
</dbReference>
<dbReference type="PANTHER" id="PTHR43033">
    <property type="entry name" value="TRNA(ILE)-LYSIDINE SYNTHASE-RELATED"/>
    <property type="match status" value="1"/>
</dbReference>
<dbReference type="PANTHER" id="PTHR43033:SF1">
    <property type="entry name" value="TRNA(ILE)-LYSIDINE SYNTHASE-RELATED"/>
    <property type="match status" value="1"/>
</dbReference>
<dbReference type="Pfam" id="PF01171">
    <property type="entry name" value="ATP_bind_3"/>
    <property type="match status" value="1"/>
</dbReference>
<dbReference type="Pfam" id="PF09179">
    <property type="entry name" value="TilS"/>
    <property type="match status" value="1"/>
</dbReference>
<dbReference type="Pfam" id="PF11734">
    <property type="entry name" value="TilS_C"/>
    <property type="match status" value="1"/>
</dbReference>
<dbReference type="SMART" id="SM00977">
    <property type="entry name" value="TilS_C"/>
    <property type="match status" value="1"/>
</dbReference>
<dbReference type="SUPFAM" id="SSF52402">
    <property type="entry name" value="Adenine nucleotide alpha hydrolases-like"/>
    <property type="match status" value="1"/>
</dbReference>
<dbReference type="SUPFAM" id="SSF82829">
    <property type="entry name" value="MesJ substrate recognition domain-like"/>
    <property type="match status" value="1"/>
</dbReference>
<dbReference type="SUPFAM" id="SSF56037">
    <property type="entry name" value="PheT/TilS domain"/>
    <property type="match status" value="1"/>
</dbReference>
<gene>
    <name evidence="1" type="primary">tilS</name>
    <name type="ordered locus">BPSL2240</name>
</gene>
<organism>
    <name type="scientific">Burkholderia pseudomallei (strain K96243)</name>
    <dbReference type="NCBI Taxonomy" id="272560"/>
    <lineage>
        <taxon>Bacteria</taxon>
        <taxon>Pseudomonadati</taxon>
        <taxon>Pseudomonadota</taxon>
        <taxon>Betaproteobacteria</taxon>
        <taxon>Burkholderiales</taxon>
        <taxon>Burkholderiaceae</taxon>
        <taxon>Burkholderia</taxon>
        <taxon>pseudomallei group</taxon>
    </lineage>
</organism>
<keyword id="KW-0067">ATP-binding</keyword>
<keyword id="KW-0963">Cytoplasm</keyword>
<keyword id="KW-0436">Ligase</keyword>
<keyword id="KW-0547">Nucleotide-binding</keyword>
<keyword id="KW-1185">Reference proteome</keyword>
<keyword id="KW-0819">tRNA processing</keyword>
<evidence type="ECO:0000255" key="1">
    <source>
        <dbReference type="HAMAP-Rule" id="MF_01161"/>
    </source>
</evidence>
<proteinExistence type="inferred from homology"/>
<comment type="function">
    <text evidence="1">Ligates lysine onto the cytidine present at position 34 of the AUA codon-specific tRNA(Ile) that contains the anticodon CAU, in an ATP-dependent manner. Cytidine is converted to lysidine, thus changing the amino acid specificity of the tRNA from methionine to isoleucine.</text>
</comment>
<comment type="catalytic activity">
    <reaction evidence="1">
        <text>cytidine(34) in tRNA(Ile2) + L-lysine + ATP = lysidine(34) in tRNA(Ile2) + AMP + diphosphate + H(+)</text>
        <dbReference type="Rhea" id="RHEA:43744"/>
        <dbReference type="Rhea" id="RHEA-COMP:10625"/>
        <dbReference type="Rhea" id="RHEA-COMP:10670"/>
        <dbReference type="ChEBI" id="CHEBI:15378"/>
        <dbReference type="ChEBI" id="CHEBI:30616"/>
        <dbReference type="ChEBI" id="CHEBI:32551"/>
        <dbReference type="ChEBI" id="CHEBI:33019"/>
        <dbReference type="ChEBI" id="CHEBI:82748"/>
        <dbReference type="ChEBI" id="CHEBI:83665"/>
        <dbReference type="ChEBI" id="CHEBI:456215"/>
        <dbReference type="EC" id="6.3.4.19"/>
    </reaction>
</comment>
<comment type="subcellular location">
    <subcellularLocation>
        <location evidence="1">Cytoplasm</location>
    </subcellularLocation>
</comment>
<comment type="domain">
    <text>The N-terminal region contains the highly conserved SGGXDS motif, predicted to be a P-loop motif involved in ATP binding.</text>
</comment>
<comment type="similarity">
    <text evidence="1">Belongs to the tRNA(Ile)-lysidine synthase family.</text>
</comment>
<sequence>MIPPHEFSAERVVFDALGVALSALPDDTPIAIAYSGGLDSTVLLHAAARIAGAGRCIALHVHHGLSANADAWLAHCAETAQALGARFDAARVDVPRASGQGIEASARDARYRALETMCARYGARTLWLAQHADDQAETVLLQLLRGAGIAGLAAMAPQYRPALADVVRMRPLLHLLRAQLERYAQQHALRWIDDESNTDTRYARNALRVDVLPALAPHFPGFRDALARTAQHAAAAQRLLDDLAAIDLRAVARADVRVLSRDALVALDDERGANLLRYWMRSLGLPGASAARLAEMVKQLRAARDAHALRVDHAGWRLRLYRDDVQWEAGDGAASEAARADVADDDAADARDDRADASAAARLPACALAWRGHEVWRLPGWRGSFVFSPVAAHEHDAVPEALLSSAALRACARAGGERMRTRQGGPGRTLKNLFQERGVPAWQRDVPLLYVGERLLFVPRIGVNRATHDGADAPGGWRRIEWRPDMLIA</sequence>
<reference key="1">
    <citation type="journal article" date="2004" name="Proc. Natl. Acad. Sci. U.S.A.">
        <title>Genomic plasticity of the causative agent of melioidosis, Burkholderia pseudomallei.</title>
        <authorList>
            <person name="Holden M.T.G."/>
            <person name="Titball R.W."/>
            <person name="Peacock S.J."/>
            <person name="Cerdeno-Tarraga A.-M."/>
            <person name="Atkins T."/>
            <person name="Crossman L.C."/>
            <person name="Pitt T."/>
            <person name="Churcher C."/>
            <person name="Mungall K.L."/>
            <person name="Bentley S.D."/>
            <person name="Sebaihia M."/>
            <person name="Thomson N.R."/>
            <person name="Bason N."/>
            <person name="Beacham I.R."/>
            <person name="Brooks K."/>
            <person name="Brown K.A."/>
            <person name="Brown N.F."/>
            <person name="Challis G.L."/>
            <person name="Cherevach I."/>
            <person name="Chillingworth T."/>
            <person name="Cronin A."/>
            <person name="Crossett B."/>
            <person name="Davis P."/>
            <person name="DeShazer D."/>
            <person name="Feltwell T."/>
            <person name="Fraser A."/>
            <person name="Hance Z."/>
            <person name="Hauser H."/>
            <person name="Holroyd S."/>
            <person name="Jagels K."/>
            <person name="Keith K.E."/>
            <person name="Maddison M."/>
            <person name="Moule S."/>
            <person name="Price C."/>
            <person name="Quail M.A."/>
            <person name="Rabbinowitsch E."/>
            <person name="Rutherford K."/>
            <person name="Sanders M."/>
            <person name="Simmonds M."/>
            <person name="Songsivilai S."/>
            <person name="Stevens K."/>
            <person name="Tumapa S."/>
            <person name="Vesaratchavest M."/>
            <person name="Whitehead S."/>
            <person name="Yeats C."/>
            <person name="Barrell B.G."/>
            <person name="Oyston P.C.F."/>
            <person name="Parkhill J."/>
        </authorList>
    </citation>
    <scope>NUCLEOTIDE SEQUENCE [LARGE SCALE GENOMIC DNA]</scope>
    <source>
        <strain>K96243</strain>
    </source>
</reference>
<protein>
    <recommendedName>
        <fullName evidence="1">tRNA(Ile)-lysidine synthase</fullName>
        <ecNumber evidence="1">6.3.4.19</ecNumber>
    </recommendedName>
    <alternativeName>
        <fullName evidence="1">tRNA(Ile)-2-lysyl-cytidine synthase</fullName>
    </alternativeName>
    <alternativeName>
        <fullName evidence="1">tRNA(Ile)-lysidine synthetase</fullName>
    </alternativeName>
</protein>